<organism>
    <name type="scientific">Geobacillus kaustophilus (strain HTA426)</name>
    <dbReference type="NCBI Taxonomy" id="235909"/>
    <lineage>
        <taxon>Bacteria</taxon>
        <taxon>Bacillati</taxon>
        <taxon>Bacillota</taxon>
        <taxon>Bacilli</taxon>
        <taxon>Bacillales</taxon>
        <taxon>Anoxybacillaceae</taxon>
        <taxon>Geobacillus</taxon>
        <taxon>Geobacillus thermoleovorans group</taxon>
    </lineage>
</organism>
<protein>
    <recommendedName>
        <fullName evidence="1">Ribosome maturation factor RimM</fullName>
    </recommendedName>
</protein>
<reference key="1">
    <citation type="journal article" date="2004" name="Nucleic Acids Res.">
        <title>Thermoadaptation trait revealed by the genome sequence of thermophilic Geobacillus kaustophilus.</title>
        <authorList>
            <person name="Takami H."/>
            <person name="Takaki Y."/>
            <person name="Chee G.-J."/>
            <person name="Nishi S."/>
            <person name="Shimamura S."/>
            <person name="Suzuki H."/>
            <person name="Matsui S."/>
            <person name="Uchiyama I."/>
        </authorList>
    </citation>
    <scope>NUCLEOTIDE SEQUENCE [LARGE SCALE GENOMIC DNA]</scope>
    <source>
        <strain>HTA426</strain>
    </source>
</reference>
<dbReference type="EMBL" id="BA000043">
    <property type="protein sequence ID" value="BAD75485.1"/>
    <property type="molecule type" value="Genomic_DNA"/>
</dbReference>
<dbReference type="SMR" id="Q5L0P5"/>
<dbReference type="STRING" id="235909.GK1200"/>
<dbReference type="KEGG" id="gka:GK1200"/>
<dbReference type="eggNOG" id="COG0806">
    <property type="taxonomic scope" value="Bacteria"/>
</dbReference>
<dbReference type="HOGENOM" id="CLU_077636_3_1_9"/>
<dbReference type="Proteomes" id="UP000001172">
    <property type="component" value="Chromosome"/>
</dbReference>
<dbReference type="GO" id="GO:0005737">
    <property type="term" value="C:cytoplasm"/>
    <property type="evidence" value="ECO:0007669"/>
    <property type="project" value="UniProtKB-SubCell"/>
</dbReference>
<dbReference type="GO" id="GO:0005840">
    <property type="term" value="C:ribosome"/>
    <property type="evidence" value="ECO:0007669"/>
    <property type="project" value="InterPro"/>
</dbReference>
<dbReference type="GO" id="GO:0043022">
    <property type="term" value="F:ribosome binding"/>
    <property type="evidence" value="ECO:0007669"/>
    <property type="project" value="InterPro"/>
</dbReference>
<dbReference type="GO" id="GO:0042274">
    <property type="term" value="P:ribosomal small subunit biogenesis"/>
    <property type="evidence" value="ECO:0007669"/>
    <property type="project" value="UniProtKB-UniRule"/>
</dbReference>
<dbReference type="GO" id="GO:0006364">
    <property type="term" value="P:rRNA processing"/>
    <property type="evidence" value="ECO:0007669"/>
    <property type="project" value="UniProtKB-UniRule"/>
</dbReference>
<dbReference type="Gene3D" id="2.30.30.240">
    <property type="entry name" value="PRC-barrel domain"/>
    <property type="match status" value="1"/>
</dbReference>
<dbReference type="Gene3D" id="2.40.30.60">
    <property type="entry name" value="RimM"/>
    <property type="match status" value="1"/>
</dbReference>
<dbReference type="HAMAP" id="MF_00014">
    <property type="entry name" value="Ribosome_mat_RimM"/>
    <property type="match status" value="1"/>
</dbReference>
<dbReference type="InterPro" id="IPR027275">
    <property type="entry name" value="PRC-brl_dom"/>
</dbReference>
<dbReference type="InterPro" id="IPR011033">
    <property type="entry name" value="PRC_barrel-like_sf"/>
</dbReference>
<dbReference type="InterPro" id="IPR011961">
    <property type="entry name" value="RimM"/>
</dbReference>
<dbReference type="InterPro" id="IPR002676">
    <property type="entry name" value="RimM_N"/>
</dbReference>
<dbReference type="InterPro" id="IPR036976">
    <property type="entry name" value="RimM_N_sf"/>
</dbReference>
<dbReference type="InterPro" id="IPR009000">
    <property type="entry name" value="Transl_B-barrel_sf"/>
</dbReference>
<dbReference type="NCBIfam" id="TIGR02273">
    <property type="entry name" value="16S_RimM"/>
    <property type="match status" value="1"/>
</dbReference>
<dbReference type="PANTHER" id="PTHR33692">
    <property type="entry name" value="RIBOSOME MATURATION FACTOR RIMM"/>
    <property type="match status" value="1"/>
</dbReference>
<dbReference type="PANTHER" id="PTHR33692:SF1">
    <property type="entry name" value="RIBOSOME MATURATION FACTOR RIMM"/>
    <property type="match status" value="1"/>
</dbReference>
<dbReference type="Pfam" id="PF05239">
    <property type="entry name" value="PRC"/>
    <property type="match status" value="1"/>
</dbReference>
<dbReference type="Pfam" id="PF01782">
    <property type="entry name" value="RimM"/>
    <property type="match status" value="1"/>
</dbReference>
<dbReference type="SUPFAM" id="SSF50346">
    <property type="entry name" value="PRC-barrel domain"/>
    <property type="match status" value="1"/>
</dbReference>
<dbReference type="SUPFAM" id="SSF50447">
    <property type="entry name" value="Translation proteins"/>
    <property type="match status" value="1"/>
</dbReference>
<keyword id="KW-0143">Chaperone</keyword>
<keyword id="KW-0963">Cytoplasm</keyword>
<keyword id="KW-1185">Reference proteome</keyword>
<keyword id="KW-0690">Ribosome biogenesis</keyword>
<keyword id="KW-0698">rRNA processing</keyword>
<name>RIMM_GEOKA</name>
<proteinExistence type="inferred from homology"/>
<comment type="function">
    <text evidence="1">An accessory protein needed during the final step in the assembly of 30S ribosomal subunit, possibly for assembly of the head region. Essential for efficient processing of 16S rRNA. May be needed both before and after RbfA during the maturation of 16S rRNA. It has affinity for free ribosomal 30S subunits but not for 70S ribosomes.</text>
</comment>
<comment type="subunit">
    <text evidence="1">Binds ribosomal protein uS19.</text>
</comment>
<comment type="subcellular location">
    <subcellularLocation>
        <location evidence="1">Cytoplasm</location>
    </subcellularLocation>
</comment>
<comment type="domain">
    <text evidence="1">The PRC barrel domain binds ribosomal protein uS19.</text>
</comment>
<comment type="similarity">
    <text evidence="1">Belongs to the RimM family.</text>
</comment>
<feature type="chain" id="PRO_0000163293" description="Ribosome maturation factor RimM">
    <location>
        <begin position="1"/>
        <end position="175"/>
    </location>
</feature>
<feature type="domain" description="PRC barrel" evidence="1">
    <location>
        <begin position="100"/>
        <end position="173"/>
    </location>
</feature>
<gene>
    <name evidence="1" type="primary">rimM</name>
    <name type="ordered locus">GK1200</name>
</gene>
<sequence length="175" mass="20066">MKAMERWFNVGKIVNTHGIRGEVRVISRTDFPEERYKKGNKLYIFRERDTEPIEVTVKSHRVHKSFDLLSFEGYDSINDVERFKGAMLKVPESQLGELAEGEYYFHEIIGCTVVTEGGETIGAVKEILTPGANDVWVVRREDGSEALIPYIDEVVLHVDPERKTIIIRPMEGLLE</sequence>
<accession>Q5L0P5</accession>
<evidence type="ECO:0000255" key="1">
    <source>
        <dbReference type="HAMAP-Rule" id="MF_00014"/>
    </source>
</evidence>